<feature type="chain" id="PRO_0000153315" description="Histidinol-phosphate aminotransferase">
    <location>
        <begin position="1"/>
        <end position="372"/>
    </location>
</feature>
<feature type="modified residue" description="N6-(pyridoxal phosphate)lysine" evidence="1">
    <location>
        <position position="229"/>
    </location>
</feature>
<comment type="catalytic activity">
    <reaction evidence="1">
        <text>L-histidinol phosphate + 2-oxoglutarate = 3-(imidazol-4-yl)-2-oxopropyl phosphate + L-glutamate</text>
        <dbReference type="Rhea" id="RHEA:23744"/>
        <dbReference type="ChEBI" id="CHEBI:16810"/>
        <dbReference type="ChEBI" id="CHEBI:29985"/>
        <dbReference type="ChEBI" id="CHEBI:57766"/>
        <dbReference type="ChEBI" id="CHEBI:57980"/>
        <dbReference type="EC" id="2.6.1.9"/>
    </reaction>
</comment>
<comment type="cofactor">
    <cofactor evidence="1">
        <name>pyridoxal 5'-phosphate</name>
        <dbReference type="ChEBI" id="CHEBI:597326"/>
    </cofactor>
</comment>
<comment type="pathway">
    <text evidence="1">Amino-acid biosynthesis; L-histidine biosynthesis; L-histidine from 5-phospho-alpha-D-ribose 1-diphosphate: step 7/9.</text>
</comment>
<comment type="subunit">
    <text evidence="1">Homodimer.</text>
</comment>
<comment type="similarity">
    <text evidence="1">Belongs to the class-II pyridoxal-phosphate-dependent aminotransferase family. Histidinol-phosphate aminotransferase subfamily.</text>
</comment>
<dbReference type="EC" id="2.6.1.9" evidence="1"/>
<dbReference type="EMBL" id="BX842648">
    <property type="protein sequence ID" value="CAE78989.1"/>
    <property type="molecule type" value="Genomic_DNA"/>
</dbReference>
<dbReference type="RefSeq" id="WP_011163591.1">
    <property type="nucleotide sequence ID" value="NC_005363.1"/>
</dbReference>
<dbReference type="SMR" id="P60998"/>
<dbReference type="STRING" id="264462.Bd1061"/>
<dbReference type="GeneID" id="93012119"/>
<dbReference type="KEGG" id="bba:Bd1061"/>
<dbReference type="eggNOG" id="COG0079">
    <property type="taxonomic scope" value="Bacteria"/>
</dbReference>
<dbReference type="HOGENOM" id="CLU_017584_3_3_7"/>
<dbReference type="UniPathway" id="UPA00031">
    <property type="reaction ID" value="UER00012"/>
</dbReference>
<dbReference type="Proteomes" id="UP000008080">
    <property type="component" value="Chromosome"/>
</dbReference>
<dbReference type="GO" id="GO:0004400">
    <property type="term" value="F:histidinol-phosphate transaminase activity"/>
    <property type="evidence" value="ECO:0007669"/>
    <property type="project" value="UniProtKB-UniRule"/>
</dbReference>
<dbReference type="GO" id="GO:0030170">
    <property type="term" value="F:pyridoxal phosphate binding"/>
    <property type="evidence" value="ECO:0007669"/>
    <property type="project" value="InterPro"/>
</dbReference>
<dbReference type="GO" id="GO:0000105">
    <property type="term" value="P:L-histidine biosynthetic process"/>
    <property type="evidence" value="ECO:0007669"/>
    <property type="project" value="UniProtKB-UniRule"/>
</dbReference>
<dbReference type="CDD" id="cd00609">
    <property type="entry name" value="AAT_like"/>
    <property type="match status" value="1"/>
</dbReference>
<dbReference type="Gene3D" id="3.90.1150.10">
    <property type="entry name" value="Aspartate Aminotransferase, domain 1"/>
    <property type="match status" value="1"/>
</dbReference>
<dbReference type="Gene3D" id="3.40.640.10">
    <property type="entry name" value="Type I PLP-dependent aspartate aminotransferase-like (Major domain)"/>
    <property type="match status" value="1"/>
</dbReference>
<dbReference type="HAMAP" id="MF_01023">
    <property type="entry name" value="HisC_aminotrans_2"/>
    <property type="match status" value="1"/>
</dbReference>
<dbReference type="InterPro" id="IPR004839">
    <property type="entry name" value="Aminotransferase_I/II_large"/>
</dbReference>
<dbReference type="InterPro" id="IPR005861">
    <property type="entry name" value="HisP_aminotrans"/>
</dbReference>
<dbReference type="InterPro" id="IPR050106">
    <property type="entry name" value="HistidinolP_aminotransfase"/>
</dbReference>
<dbReference type="InterPro" id="IPR015424">
    <property type="entry name" value="PyrdxlP-dep_Trfase"/>
</dbReference>
<dbReference type="InterPro" id="IPR015421">
    <property type="entry name" value="PyrdxlP-dep_Trfase_major"/>
</dbReference>
<dbReference type="InterPro" id="IPR015422">
    <property type="entry name" value="PyrdxlP-dep_Trfase_small"/>
</dbReference>
<dbReference type="NCBIfam" id="TIGR01141">
    <property type="entry name" value="hisC"/>
    <property type="match status" value="1"/>
</dbReference>
<dbReference type="PANTHER" id="PTHR43643:SF3">
    <property type="entry name" value="HISTIDINOL-PHOSPHATE AMINOTRANSFERASE"/>
    <property type="match status" value="1"/>
</dbReference>
<dbReference type="PANTHER" id="PTHR43643">
    <property type="entry name" value="HISTIDINOL-PHOSPHATE AMINOTRANSFERASE 2"/>
    <property type="match status" value="1"/>
</dbReference>
<dbReference type="Pfam" id="PF00155">
    <property type="entry name" value="Aminotran_1_2"/>
    <property type="match status" value="1"/>
</dbReference>
<dbReference type="SUPFAM" id="SSF53383">
    <property type="entry name" value="PLP-dependent transferases"/>
    <property type="match status" value="1"/>
</dbReference>
<gene>
    <name evidence="1" type="primary">hisC</name>
    <name type="ordered locus">Bd1061</name>
</gene>
<sequence length="372" mass="41902">MKISPEILNLVPYKPGKPISETQREYGLTTVYKLASNENPLGPSPKAMAAVKQALDHQHLYPDPSHYELLQTLSKEWGFPTKQLAIGNGSDELIDLLCRIYCEHHDGVLTSAAAFNAYEVSAPANRAVIHKVPMAEGYRFDLPAIADYFLKHPEKNIRLIFVSNPNNPTGTYATKAEVEAFLQKVGNRDDVMIIFDEAYNEFVRAKDYASAQGYMGQYKNLIVLRTFSKIYGLAGFRLGAMIAPPEVVEVFNRVRKPFNVNDLAQVAANAALQDKEFIERSQQICWKGLDYFYKKLEELGLPYIPSQGNFVMFDTLRDAAKVNEALLRRGIIMRPLLNYGFKTHLRLSVGRDHENEAAMVALAEVLKEITPL</sequence>
<evidence type="ECO:0000255" key="1">
    <source>
        <dbReference type="HAMAP-Rule" id="MF_01023"/>
    </source>
</evidence>
<organism>
    <name type="scientific">Bdellovibrio bacteriovorus (strain ATCC 15356 / DSM 50701 / NCIMB 9529 / HD100)</name>
    <dbReference type="NCBI Taxonomy" id="264462"/>
    <lineage>
        <taxon>Bacteria</taxon>
        <taxon>Pseudomonadati</taxon>
        <taxon>Bdellovibrionota</taxon>
        <taxon>Bdellovibrionia</taxon>
        <taxon>Bdellovibrionales</taxon>
        <taxon>Pseudobdellovibrionaceae</taxon>
        <taxon>Bdellovibrio</taxon>
    </lineage>
</organism>
<accession>P60998</accession>
<keyword id="KW-0028">Amino-acid biosynthesis</keyword>
<keyword id="KW-0032">Aminotransferase</keyword>
<keyword id="KW-0368">Histidine biosynthesis</keyword>
<keyword id="KW-0663">Pyridoxal phosphate</keyword>
<keyword id="KW-1185">Reference proteome</keyword>
<keyword id="KW-0808">Transferase</keyword>
<reference key="1">
    <citation type="journal article" date="2004" name="Science">
        <title>A predator unmasked: life cycle of Bdellovibrio bacteriovorus from a genomic perspective.</title>
        <authorList>
            <person name="Rendulic S."/>
            <person name="Jagtap P."/>
            <person name="Rosinus A."/>
            <person name="Eppinger M."/>
            <person name="Baar C."/>
            <person name="Lanz C."/>
            <person name="Keller H."/>
            <person name="Lambert C."/>
            <person name="Evans K.J."/>
            <person name="Goesmann A."/>
            <person name="Meyer F."/>
            <person name="Sockett R.E."/>
            <person name="Schuster S.C."/>
        </authorList>
    </citation>
    <scope>NUCLEOTIDE SEQUENCE [LARGE SCALE GENOMIC DNA]</scope>
    <source>
        <strain>ATCC 15356 / DSM 50701 / NCIMB 9529 / HD100</strain>
    </source>
</reference>
<name>HIS8_BDEBA</name>
<proteinExistence type="inferred from homology"/>
<protein>
    <recommendedName>
        <fullName evidence="1">Histidinol-phosphate aminotransferase</fullName>
        <ecNumber evidence="1">2.6.1.9</ecNumber>
    </recommendedName>
    <alternativeName>
        <fullName evidence="1">Imidazole acetol-phosphate transaminase</fullName>
    </alternativeName>
</protein>